<organism>
    <name type="scientific">Corynebacterium jeikeium (strain K411)</name>
    <dbReference type="NCBI Taxonomy" id="306537"/>
    <lineage>
        <taxon>Bacteria</taxon>
        <taxon>Bacillati</taxon>
        <taxon>Actinomycetota</taxon>
        <taxon>Actinomycetes</taxon>
        <taxon>Mycobacteriales</taxon>
        <taxon>Corynebacteriaceae</taxon>
        <taxon>Corynebacterium</taxon>
    </lineage>
</organism>
<sequence length="517" mass="56087">MTENTSAEGPQTLRELQIANRQLGARNAKLVELLQASRTKLEEINGRLEALAEPPSTYGTLLQANRDFTAEVFTAGRRMRLMVSPHVPQHELVPGAMVRLGEGQQVVEVTGQPDFGDIAQVVEVSGDRLIIADKVGEEYVVKAAGDLAKEVVTGDSVIVDRKSGWAFEAVPRAETNNLILEEVPDVTYDDIGGLGQQITQIRDAVELPFLHPEIYTRYGLRPPKGVLLYGPPGNGKTLIAKAVANSLAQSDSPYFLNIKGPELLNKFVGETERQIRAIFEQARRVASSGRPVIVFFDEMEALFRTRGTGVSSDMESTVVPQLLAELDGVEAAGNVIVIGASNREELIDPAILRPGRLDVKIRIARPDAFGAAAILSKHLDASLPIDADFSAATGSNEAAAAALRQSIVDELFTRDEEHRYVTLHYADGSREDLYWADFVSGAMLANIVDRAKTLAIKDALHNGANGTDGLRPEHVNAAVLAEVGDSEDLPDTTNPAEWARIYGHGTKRVVDIDVHKV</sequence>
<gene>
    <name evidence="1" type="primary">arc</name>
    <name type="ordered locus">jk0948</name>
</gene>
<name>ARC_CORJK</name>
<feature type="chain" id="PRO_0000396979" description="AAA ATPase forming ring-shaped complexes">
    <location>
        <begin position="1"/>
        <end position="517"/>
    </location>
</feature>
<feature type="coiled-coil region" evidence="1">
    <location>
        <begin position="25"/>
        <end position="53"/>
    </location>
</feature>
<feature type="binding site" evidence="1">
    <location>
        <begin position="233"/>
        <end position="238"/>
    </location>
    <ligand>
        <name>ATP</name>
        <dbReference type="ChEBI" id="CHEBI:30616"/>
    </ligand>
</feature>
<accession>Q4JVP5</accession>
<reference key="1">
    <citation type="journal article" date="2005" name="J. Bacteriol.">
        <title>Complete genome sequence and analysis of the multiresistant nosocomial pathogen Corynebacterium jeikeium K411, a lipid-requiring bacterium of the human skin flora.</title>
        <authorList>
            <person name="Tauch A."/>
            <person name="Kaiser O."/>
            <person name="Hain T."/>
            <person name="Goesmann A."/>
            <person name="Weisshaar B."/>
            <person name="Albersmeier A."/>
            <person name="Bekel T."/>
            <person name="Bischoff N."/>
            <person name="Brune I."/>
            <person name="Chakraborty T."/>
            <person name="Kalinowski J."/>
            <person name="Meyer F."/>
            <person name="Rupp O."/>
            <person name="Schneiker S."/>
            <person name="Viehoever P."/>
            <person name="Puehler A."/>
        </authorList>
    </citation>
    <scope>NUCLEOTIDE SEQUENCE [LARGE SCALE GENOMIC DNA]</scope>
    <source>
        <strain>K411</strain>
    </source>
</reference>
<evidence type="ECO:0000255" key="1">
    <source>
        <dbReference type="HAMAP-Rule" id="MF_02112"/>
    </source>
</evidence>
<dbReference type="EMBL" id="CR931997">
    <property type="protein sequence ID" value="CAI37112.1"/>
    <property type="molecule type" value="Genomic_DNA"/>
</dbReference>
<dbReference type="RefSeq" id="WP_011273533.1">
    <property type="nucleotide sequence ID" value="NC_007164.1"/>
</dbReference>
<dbReference type="SMR" id="Q4JVP5"/>
<dbReference type="STRING" id="306537.jk0948"/>
<dbReference type="KEGG" id="cjk:jk0948"/>
<dbReference type="PATRIC" id="fig|306537.10.peg.959"/>
<dbReference type="eggNOG" id="COG1222">
    <property type="taxonomic scope" value="Bacteria"/>
</dbReference>
<dbReference type="HOGENOM" id="CLU_036054_0_0_11"/>
<dbReference type="OrthoDB" id="9809379at2"/>
<dbReference type="Proteomes" id="UP000000545">
    <property type="component" value="Chromosome"/>
</dbReference>
<dbReference type="GO" id="GO:0000502">
    <property type="term" value="C:proteasome complex"/>
    <property type="evidence" value="ECO:0007669"/>
    <property type="project" value="InterPro"/>
</dbReference>
<dbReference type="GO" id="GO:0005524">
    <property type="term" value="F:ATP binding"/>
    <property type="evidence" value="ECO:0007669"/>
    <property type="project" value="UniProtKB-UniRule"/>
</dbReference>
<dbReference type="GO" id="GO:0016887">
    <property type="term" value="F:ATP hydrolysis activity"/>
    <property type="evidence" value="ECO:0007669"/>
    <property type="project" value="UniProtKB-UniRule"/>
</dbReference>
<dbReference type="GO" id="GO:0019941">
    <property type="term" value="P:modification-dependent protein catabolic process"/>
    <property type="evidence" value="ECO:0007669"/>
    <property type="project" value="InterPro"/>
</dbReference>
<dbReference type="GO" id="GO:0010498">
    <property type="term" value="P:proteasomal protein catabolic process"/>
    <property type="evidence" value="ECO:0007669"/>
    <property type="project" value="InterPro"/>
</dbReference>
<dbReference type="FunFam" id="3.40.50.300:FF:001025">
    <property type="entry name" value="ATPase family, AAA domain-containing 2B"/>
    <property type="match status" value="1"/>
</dbReference>
<dbReference type="Gene3D" id="1.10.8.60">
    <property type="match status" value="1"/>
</dbReference>
<dbReference type="Gene3D" id="1.20.5.170">
    <property type="match status" value="1"/>
</dbReference>
<dbReference type="Gene3D" id="2.40.50.140">
    <property type="entry name" value="Nucleic acid-binding proteins"/>
    <property type="match status" value="2"/>
</dbReference>
<dbReference type="Gene3D" id="3.40.50.300">
    <property type="entry name" value="P-loop containing nucleotide triphosphate hydrolases"/>
    <property type="match status" value="1"/>
</dbReference>
<dbReference type="HAMAP" id="MF_02112">
    <property type="entry name" value="ARC_ATPase"/>
    <property type="match status" value="1"/>
</dbReference>
<dbReference type="InterPro" id="IPR003593">
    <property type="entry name" value="AAA+_ATPase"/>
</dbReference>
<dbReference type="InterPro" id="IPR050168">
    <property type="entry name" value="AAA_ATPase_domain"/>
</dbReference>
<dbReference type="InterPro" id="IPR003959">
    <property type="entry name" value="ATPase_AAA_core"/>
</dbReference>
<dbReference type="InterPro" id="IPR003960">
    <property type="entry name" value="ATPase_AAA_CS"/>
</dbReference>
<dbReference type="InterPro" id="IPR012340">
    <property type="entry name" value="NA-bd_OB-fold"/>
</dbReference>
<dbReference type="InterPro" id="IPR027417">
    <property type="entry name" value="P-loop_NTPase"/>
</dbReference>
<dbReference type="InterPro" id="IPR032501">
    <property type="entry name" value="Prot_ATP_ID_OB_2nd"/>
</dbReference>
<dbReference type="InterPro" id="IPR041626">
    <property type="entry name" value="Prot_ATP_ID_OB_N"/>
</dbReference>
<dbReference type="InterPro" id="IPR022482">
    <property type="entry name" value="Proteasome_ATPase"/>
</dbReference>
<dbReference type="NCBIfam" id="TIGR03689">
    <property type="entry name" value="pup_AAA"/>
    <property type="match status" value="1"/>
</dbReference>
<dbReference type="PANTHER" id="PTHR23077">
    <property type="entry name" value="AAA-FAMILY ATPASE"/>
    <property type="match status" value="1"/>
</dbReference>
<dbReference type="PANTHER" id="PTHR23077:SF144">
    <property type="entry name" value="PROTEASOME-ASSOCIATED ATPASE"/>
    <property type="match status" value="1"/>
</dbReference>
<dbReference type="Pfam" id="PF00004">
    <property type="entry name" value="AAA"/>
    <property type="match status" value="1"/>
</dbReference>
<dbReference type="Pfam" id="PF16450">
    <property type="entry name" value="Prot_ATP_ID_OB_C"/>
    <property type="match status" value="1"/>
</dbReference>
<dbReference type="Pfam" id="PF17758">
    <property type="entry name" value="Prot_ATP_ID_OB_N"/>
    <property type="match status" value="1"/>
</dbReference>
<dbReference type="SMART" id="SM00382">
    <property type="entry name" value="AAA"/>
    <property type="match status" value="1"/>
</dbReference>
<dbReference type="SUPFAM" id="SSF52540">
    <property type="entry name" value="P-loop containing nucleoside triphosphate hydrolases"/>
    <property type="match status" value="1"/>
</dbReference>
<dbReference type="PROSITE" id="PS00674">
    <property type="entry name" value="AAA"/>
    <property type="match status" value="1"/>
</dbReference>
<protein>
    <recommendedName>
        <fullName evidence="1">AAA ATPase forming ring-shaped complexes</fullName>
        <shortName evidence="1">ARC</shortName>
    </recommendedName>
</protein>
<comment type="subunit">
    <text evidence="1">Homohexamer. Assembles into a hexameric ring structure.</text>
</comment>
<comment type="similarity">
    <text evidence="1">Belongs to the AAA ATPase family.</text>
</comment>
<keyword id="KW-0067">ATP-binding</keyword>
<keyword id="KW-0175">Coiled coil</keyword>
<keyword id="KW-0547">Nucleotide-binding</keyword>
<keyword id="KW-1185">Reference proteome</keyword>
<proteinExistence type="inferred from homology"/>